<feature type="chain" id="PRO_0000146595" description="Small ribosomal subunit protein uS10">
    <location>
        <begin position="1"/>
        <end position="102"/>
    </location>
</feature>
<feature type="strand" evidence="3">
    <location>
        <begin position="5"/>
        <end position="10"/>
    </location>
</feature>
<feature type="helix" evidence="3">
    <location>
        <begin position="15"/>
        <end position="31"/>
    </location>
</feature>
<feature type="strand" evidence="3">
    <location>
        <begin position="36"/>
        <end position="41"/>
    </location>
</feature>
<feature type="strand" evidence="3">
    <location>
        <begin position="49"/>
        <end position="53"/>
    </location>
</feature>
<feature type="strand" evidence="3">
    <location>
        <begin position="55"/>
        <end position="57"/>
    </location>
</feature>
<feature type="strand" evidence="3">
    <location>
        <begin position="59"/>
        <end position="65"/>
    </location>
</feature>
<feature type="strand" evidence="3">
    <location>
        <begin position="72"/>
        <end position="78"/>
    </location>
</feature>
<feature type="helix" evidence="3">
    <location>
        <begin position="81"/>
        <end position="87"/>
    </location>
</feature>
<accession>Q931G5</accession>
<proteinExistence type="evidence at protein level"/>
<comment type="function">
    <text evidence="1">Involved in the binding of tRNA to the ribosomes.</text>
</comment>
<comment type="subunit">
    <text evidence="1">Part of the 30S ribosomal subunit.</text>
</comment>
<comment type="similarity">
    <text evidence="1">Belongs to the universal ribosomal protein uS10 family.</text>
</comment>
<organism>
    <name type="scientific">Staphylococcus aureus (strain Mu50 / ATCC 700699)</name>
    <dbReference type="NCBI Taxonomy" id="158878"/>
    <lineage>
        <taxon>Bacteria</taxon>
        <taxon>Bacillati</taxon>
        <taxon>Bacillota</taxon>
        <taxon>Bacilli</taxon>
        <taxon>Bacillales</taxon>
        <taxon>Staphylococcaceae</taxon>
        <taxon>Staphylococcus</taxon>
    </lineage>
</organism>
<evidence type="ECO:0000255" key="1">
    <source>
        <dbReference type="HAMAP-Rule" id="MF_00508"/>
    </source>
</evidence>
<evidence type="ECO:0000305" key="2"/>
<evidence type="ECO:0007829" key="3">
    <source>
        <dbReference type="PDB" id="8BYV"/>
    </source>
</evidence>
<gene>
    <name evidence="1" type="primary">rpsJ</name>
    <name type="ordered locus">SAV2251</name>
</gene>
<keyword id="KW-0002">3D-structure</keyword>
<keyword id="KW-0687">Ribonucleoprotein</keyword>
<keyword id="KW-0689">Ribosomal protein</keyword>
<sequence>MAKQKIRIRLKAYDHRVIDQSAEKIVETAKRSGADVSGPIPLPTEKSVYTIIRAVHMYKDSREQFEQRTHKRLIDIVNPTPKTVDALMGLNLPSGVDIEIKL</sequence>
<name>RS10_STAAM</name>
<protein>
    <recommendedName>
        <fullName evidence="1">Small ribosomal subunit protein uS10</fullName>
    </recommendedName>
    <alternativeName>
        <fullName evidence="2">30S ribosomal protein S10</fullName>
    </alternativeName>
</protein>
<reference key="1">
    <citation type="journal article" date="2001" name="Lancet">
        <title>Whole genome sequencing of meticillin-resistant Staphylococcus aureus.</title>
        <authorList>
            <person name="Kuroda M."/>
            <person name="Ohta T."/>
            <person name="Uchiyama I."/>
            <person name="Baba T."/>
            <person name="Yuzawa H."/>
            <person name="Kobayashi I."/>
            <person name="Cui L."/>
            <person name="Oguchi A."/>
            <person name="Aoki K."/>
            <person name="Nagai Y."/>
            <person name="Lian J.-Q."/>
            <person name="Ito T."/>
            <person name="Kanamori M."/>
            <person name="Matsumaru H."/>
            <person name="Maruyama A."/>
            <person name="Murakami H."/>
            <person name="Hosoyama A."/>
            <person name="Mizutani-Ui Y."/>
            <person name="Takahashi N.K."/>
            <person name="Sawano T."/>
            <person name="Inoue R."/>
            <person name="Kaito C."/>
            <person name="Sekimizu K."/>
            <person name="Hirakawa H."/>
            <person name="Kuhara S."/>
            <person name="Goto S."/>
            <person name="Yabuzaki J."/>
            <person name="Kanehisa M."/>
            <person name="Yamashita A."/>
            <person name="Oshima K."/>
            <person name="Furuya K."/>
            <person name="Yoshino C."/>
            <person name="Shiba T."/>
            <person name="Hattori M."/>
            <person name="Ogasawara N."/>
            <person name="Hayashi H."/>
            <person name="Hiramatsu K."/>
        </authorList>
    </citation>
    <scope>NUCLEOTIDE SEQUENCE [LARGE SCALE GENOMIC DNA]</scope>
    <source>
        <strain>Mu50 / ATCC 700699</strain>
    </source>
</reference>
<dbReference type="EMBL" id="BA000017">
    <property type="protein sequence ID" value="BAB58413.1"/>
    <property type="molecule type" value="Genomic_DNA"/>
</dbReference>
<dbReference type="RefSeq" id="WP_001118669.1">
    <property type="nucleotide sequence ID" value="NC_002758.2"/>
</dbReference>
<dbReference type="PDB" id="5LI0">
    <property type="method" value="EM"/>
    <property type="resolution" value="3.80 A"/>
    <property type="chains" value="j=1-102"/>
</dbReference>
<dbReference type="PDB" id="5ND8">
    <property type="method" value="EM"/>
    <property type="resolution" value="3.70 A"/>
    <property type="chains" value="j=1-102"/>
</dbReference>
<dbReference type="PDB" id="5ND9">
    <property type="method" value="EM"/>
    <property type="resolution" value="3.70 A"/>
    <property type="chains" value="j=1-102"/>
</dbReference>
<dbReference type="PDB" id="5TCU">
    <property type="method" value="EM"/>
    <property type="resolution" value="3.90 A"/>
    <property type="chains" value="S1=6-85"/>
</dbReference>
<dbReference type="PDB" id="7BGE">
    <property type="method" value="EM"/>
    <property type="resolution" value="3.60 A"/>
    <property type="chains" value="j=1-102"/>
</dbReference>
<dbReference type="PDB" id="8BH6">
    <property type="method" value="EM"/>
    <property type="resolution" value="3.70 A"/>
    <property type="chains" value="j=1-102"/>
</dbReference>
<dbReference type="PDB" id="8BH7">
    <property type="method" value="EM"/>
    <property type="resolution" value="4.23 A"/>
    <property type="chains" value="j=1-102"/>
</dbReference>
<dbReference type="PDB" id="8BYV">
    <property type="method" value="EM"/>
    <property type="resolution" value="2.89 A"/>
    <property type="chains" value="j=1-102"/>
</dbReference>
<dbReference type="PDBsum" id="5LI0"/>
<dbReference type="PDBsum" id="5ND8"/>
<dbReference type="PDBsum" id="5ND9"/>
<dbReference type="PDBsum" id="5TCU"/>
<dbReference type="PDBsum" id="7BGE"/>
<dbReference type="PDBsum" id="8BH6"/>
<dbReference type="PDBsum" id="8BH7"/>
<dbReference type="PDBsum" id="8BYV"/>
<dbReference type="EMDB" id="EMD-12179"/>
<dbReference type="EMDB" id="EMD-16048"/>
<dbReference type="EMDB" id="EMD-16049"/>
<dbReference type="EMDB" id="EMD-16334"/>
<dbReference type="EMDB" id="EMD-3625"/>
<dbReference type="EMDB" id="EMD-4050"/>
<dbReference type="SMR" id="Q931G5"/>
<dbReference type="IntAct" id="Q931G5">
    <property type="interactions" value="1"/>
</dbReference>
<dbReference type="KEGG" id="sav:SAV2251"/>
<dbReference type="HOGENOM" id="CLU_122625_1_3_9"/>
<dbReference type="PhylomeDB" id="Q931G5"/>
<dbReference type="Proteomes" id="UP000002481">
    <property type="component" value="Chromosome"/>
</dbReference>
<dbReference type="GO" id="GO:1990904">
    <property type="term" value="C:ribonucleoprotein complex"/>
    <property type="evidence" value="ECO:0007669"/>
    <property type="project" value="UniProtKB-KW"/>
</dbReference>
<dbReference type="GO" id="GO:0005840">
    <property type="term" value="C:ribosome"/>
    <property type="evidence" value="ECO:0007669"/>
    <property type="project" value="UniProtKB-KW"/>
</dbReference>
<dbReference type="GO" id="GO:0003735">
    <property type="term" value="F:structural constituent of ribosome"/>
    <property type="evidence" value="ECO:0007669"/>
    <property type="project" value="InterPro"/>
</dbReference>
<dbReference type="GO" id="GO:0000049">
    <property type="term" value="F:tRNA binding"/>
    <property type="evidence" value="ECO:0007669"/>
    <property type="project" value="UniProtKB-UniRule"/>
</dbReference>
<dbReference type="GO" id="GO:0006412">
    <property type="term" value="P:translation"/>
    <property type="evidence" value="ECO:0007669"/>
    <property type="project" value="UniProtKB-UniRule"/>
</dbReference>
<dbReference type="FunFam" id="3.30.70.600:FF:000001">
    <property type="entry name" value="30S ribosomal protein S10"/>
    <property type="match status" value="1"/>
</dbReference>
<dbReference type="Gene3D" id="3.30.70.600">
    <property type="entry name" value="Ribosomal protein S10 domain"/>
    <property type="match status" value="1"/>
</dbReference>
<dbReference type="HAMAP" id="MF_00508">
    <property type="entry name" value="Ribosomal_uS10"/>
    <property type="match status" value="1"/>
</dbReference>
<dbReference type="InterPro" id="IPR001848">
    <property type="entry name" value="Ribosomal_uS10"/>
</dbReference>
<dbReference type="InterPro" id="IPR018268">
    <property type="entry name" value="Ribosomal_uS10_CS"/>
</dbReference>
<dbReference type="InterPro" id="IPR027486">
    <property type="entry name" value="Ribosomal_uS10_dom"/>
</dbReference>
<dbReference type="InterPro" id="IPR036838">
    <property type="entry name" value="Ribosomal_uS10_dom_sf"/>
</dbReference>
<dbReference type="NCBIfam" id="NF001861">
    <property type="entry name" value="PRK00596.1"/>
    <property type="match status" value="1"/>
</dbReference>
<dbReference type="NCBIfam" id="TIGR01049">
    <property type="entry name" value="rpsJ_bact"/>
    <property type="match status" value="1"/>
</dbReference>
<dbReference type="PANTHER" id="PTHR11700">
    <property type="entry name" value="30S RIBOSOMAL PROTEIN S10 FAMILY MEMBER"/>
    <property type="match status" value="1"/>
</dbReference>
<dbReference type="Pfam" id="PF00338">
    <property type="entry name" value="Ribosomal_S10"/>
    <property type="match status" value="1"/>
</dbReference>
<dbReference type="PRINTS" id="PR00971">
    <property type="entry name" value="RIBOSOMALS10"/>
</dbReference>
<dbReference type="SMART" id="SM01403">
    <property type="entry name" value="Ribosomal_S10"/>
    <property type="match status" value="1"/>
</dbReference>
<dbReference type="SUPFAM" id="SSF54999">
    <property type="entry name" value="Ribosomal protein S10"/>
    <property type="match status" value="1"/>
</dbReference>
<dbReference type="PROSITE" id="PS00361">
    <property type="entry name" value="RIBOSOMAL_S10"/>
    <property type="match status" value="1"/>
</dbReference>